<keyword id="KW-0131">Cell cycle</keyword>
<keyword id="KW-0132">Cell division</keyword>
<keyword id="KW-0143">Chaperone</keyword>
<keyword id="KW-0963">Cytoplasm</keyword>
<keyword id="KW-0413">Isomerase</keyword>
<keyword id="KW-0697">Rotamase</keyword>
<feature type="chain" id="PRO_1000022670" description="Trigger factor">
    <location>
        <begin position="1"/>
        <end position="430"/>
    </location>
</feature>
<feature type="domain" description="PPIase FKBP-type" evidence="1">
    <location>
        <begin position="163"/>
        <end position="248"/>
    </location>
</feature>
<evidence type="ECO:0000255" key="1">
    <source>
        <dbReference type="HAMAP-Rule" id="MF_00303"/>
    </source>
</evidence>
<protein>
    <recommendedName>
        <fullName evidence="1">Trigger factor</fullName>
        <shortName evidence="1">TF</shortName>
        <ecNumber evidence="1">5.2.1.8</ecNumber>
    </recommendedName>
    <alternativeName>
        <fullName evidence="1">PPIase</fullName>
    </alternativeName>
</protein>
<accession>A7GIH3</accession>
<comment type="function">
    <text evidence="1">Involved in protein export. Acts as a chaperone by maintaining the newly synthesized protein in an open conformation. Functions as a peptidyl-prolyl cis-trans isomerase.</text>
</comment>
<comment type="catalytic activity">
    <reaction evidence="1">
        <text>[protein]-peptidylproline (omega=180) = [protein]-peptidylproline (omega=0)</text>
        <dbReference type="Rhea" id="RHEA:16237"/>
        <dbReference type="Rhea" id="RHEA-COMP:10747"/>
        <dbReference type="Rhea" id="RHEA-COMP:10748"/>
        <dbReference type="ChEBI" id="CHEBI:83833"/>
        <dbReference type="ChEBI" id="CHEBI:83834"/>
        <dbReference type="EC" id="5.2.1.8"/>
    </reaction>
</comment>
<comment type="subcellular location">
    <subcellularLocation>
        <location>Cytoplasm</location>
    </subcellularLocation>
    <text evidence="1">About half TF is bound to the ribosome near the polypeptide exit tunnel while the other half is free in the cytoplasm.</text>
</comment>
<comment type="domain">
    <text evidence="1">Consists of 3 domains; the N-terminus binds the ribosome, the middle domain has PPIase activity, while the C-terminus has intrinsic chaperone activity on its own.</text>
</comment>
<comment type="similarity">
    <text evidence="1">Belongs to the FKBP-type PPIase family. Tig subfamily.</text>
</comment>
<dbReference type="EC" id="5.2.1.8" evidence="1"/>
<dbReference type="EMBL" id="CP000728">
    <property type="protein sequence ID" value="ABS39551.1"/>
    <property type="molecule type" value="Genomic_DNA"/>
</dbReference>
<dbReference type="RefSeq" id="WP_012100979.1">
    <property type="nucleotide sequence ID" value="NC_009699.1"/>
</dbReference>
<dbReference type="SMR" id="A7GIH3"/>
<dbReference type="KEGG" id="cbf:CLI_3371"/>
<dbReference type="HOGENOM" id="CLU_033058_3_2_9"/>
<dbReference type="Proteomes" id="UP000002410">
    <property type="component" value="Chromosome"/>
</dbReference>
<dbReference type="GO" id="GO:0005737">
    <property type="term" value="C:cytoplasm"/>
    <property type="evidence" value="ECO:0007669"/>
    <property type="project" value="UniProtKB-SubCell"/>
</dbReference>
<dbReference type="GO" id="GO:0003755">
    <property type="term" value="F:peptidyl-prolyl cis-trans isomerase activity"/>
    <property type="evidence" value="ECO:0007669"/>
    <property type="project" value="UniProtKB-UniRule"/>
</dbReference>
<dbReference type="GO" id="GO:0044183">
    <property type="term" value="F:protein folding chaperone"/>
    <property type="evidence" value="ECO:0007669"/>
    <property type="project" value="TreeGrafter"/>
</dbReference>
<dbReference type="GO" id="GO:0043022">
    <property type="term" value="F:ribosome binding"/>
    <property type="evidence" value="ECO:0007669"/>
    <property type="project" value="TreeGrafter"/>
</dbReference>
<dbReference type="GO" id="GO:0051083">
    <property type="term" value="P:'de novo' cotranslational protein folding"/>
    <property type="evidence" value="ECO:0007669"/>
    <property type="project" value="TreeGrafter"/>
</dbReference>
<dbReference type="GO" id="GO:0051301">
    <property type="term" value="P:cell division"/>
    <property type="evidence" value="ECO:0007669"/>
    <property type="project" value="UniProtKB-KW"/>
</dbReference>
<dbReference type="GO" id="GO:0061077">
    <property type="term" value="P:chaperone-mediated protein folding"/>
    <property type="evidence" value="ECO:0007669"/>
    <property type="project" value="TreeGrafter"/>
</dbReference>
<dbReference type="GO" id="GO:0015031">
    <property type="term" value="P:protein transport"/>
    <property type="evidence" value="ECO:0007669"/>
    <property type="project" value="UniProtKB-UniRule"/>
</dbReference>
<dbReference type="GO" id="GO:0043335">
    <property type="term" value="P:protein unfolding"/>
    <property type="evidence" value="ECO:0007669"/>
    <property type="project" value="TreeGrafter"/>
</dbReference>
<dbReference type="FunFam" id="1.10.3120.10:FF:000010">
    <property type="entry name" value="Trigger factor"/>
    <property type="match status" value="1"/>
</dbReference>
<dbReference type="FunFam" id="3.10.50.40:FF:000001">
    <property type="entry name" value="Trigger factor"/>
    <property type="match status" value="1"/>
</dbReference>
<dbReference type="Gene3D" id="3.10.50.40">
    <property type="match status" value="1"/>
</dbReference>
<dbReference type="Gene3D" id="3.30.70.1050">
    <property type="entry name" value="Trigger factor ribosome-binding domain"/>
    <property type="match status" value="1"/>
</dbReference>
<dbReference type="Gene3D" id="1.10.3120.10">
    <property type="entry name" value="Trigger factor, C-terminal domain"/>
    <property type="match status" value="1"/>
</dbReference>
<dbReference type="HAMAP" id="MF_00303">
    <property type="entry name" value="Trigger_factor_Tig"/>
    <property type="match status" value="1"/>
</dbReference>
<dbReference type="InterPro" id="IPR046357">
    <property type="entry name" value="PPIase_dom_sf"/>
</dbReference>
<dbReference type="InterPro" id="IPR001179">
    <property type="entry name" value="PPIase_FKBP_dom"/>
</dbReference>
<dbReference type="InterPro" id="IPR005215">
    <property type="entry name" value="Trig_fac"/>
</dbReference>
<dbReference type="InterPro" id="IPR008880">
    <property type="entry name" value="Trigger_fac_C"/>
</dbReference>
<dbReference type="InterPro" id="IPR037041">
    <property type="entry name" value="Trigger_fac_C_sf"/>
</dbReference>
<dbReference type="InterPro" id="IPR008881">
    <property type="entry name" value="Trigger_fac_ribosome-bd_bac"/>
</dbReference>
<dbReference type="InterPro" id="IPR036611">
    <property type="entry name" value="Trigger_fac_ribosome-bd_sf"/>
</dbReference>
<dbReference type="InterPro" id="IPR027304">
    <property type="entry name" value="Trigger_fact/SurA_dom_sf"/>
</dbReference>
<dbReference type="NCBIfam" id="TIGR00115">
    <property type="entry name" value="tig"/>
    <property type="match status" value="1"/>
</dbReference>
<dbReference type="PANTHER" id="PTHR30560">
    <property type="entry name" value="TRIGGER FACTOR CHAPERONE AND PEPTIDYL-PROLYL CIS/TRANS ISOMERASE"/>
    <property type="match status" value="1"/>
</dbReference>
<dbReference type="PANTHER" id="PTHR30560:SF3">
    <property type="entry name" value="TRIGGER FACTOR-LIKE PROTEIN TIG, CHLOROPLASTIC"/>
    <property type="match status" value="1"/>
</dbReference>
<dbReference type="Pfam" id="PF00254">
    <property type="entry name" value="FKBP_C"/>
    <property type="match status" value="1"/>
</dbReference>
<dbReference type="Pfam" id="PF05698">
    <property type="entry name" value="Trigger_C"/>
    <property type="match status" value="1"/>
</dbReference>
<dbReference type="Pfam" id="PF05697">
    <property type="entry name" value="Trigger_N"/>
    <property type="match status" value="1"/>
</dbReference>
<dbReference type="PIRSF" id="PIRSF003095">
    <property type="entry name" value="Trigger_factor"/>
    <property type="match status" value="1"/>
</dbReference>
<dbReference type="SUPFAM" id="SSF54534">
    <property type="entry name" value="FKBP-like"/>
    <property type="match status" value="1"/>
</dbReference>
<dbReference type="SUPFAM" id="SSF109998">
    <property type="entry name" value="Triger factor/SurA peptide-binding domain-like"/>
    <property type="match status" value="1"/>
</dbReference>
<dbReference type="SUPFAM" id="SSF102735">
    <property type="entry name" value="Trigger factor ribosome-binding domain"/>
    <property type="match status" value="1"/>
</dbReference>
<dbReference type="PROSITE" id="PS50059">
    <property type="entry name" value="FKBP_PPIASE"/>
    <property type="match status" value="1"/>
</dbReference>
<reference key="1">
    <citation type="submission" date="2007-06" db="EMBL/GenBank/DDBJ databases">
        <authorList>
            <person name="Brinkac L.M."/>
            <person name="Daugherty S."/>
            <person name="Dodson R.J."/>
            <person name="Madupu R."/>
            <person name="Brown J.L."/>
            <person name="Bruce D."/>
            <person name="Detter C."/>
            <person name="Munk C."/>
            <person name="Smith L.A."/>
            <person name="Smith T.J."/>
            <person name="White O."/>
            <person name="Brettin T.S."/>
        </authorList>
    </citation>
    <scope>NUCLEOTIDE SEQUENCE [LARGE SCALE GENOMIC DNA]</scope>
    <source>
        <strain>Langeland / NCTC 10281 / Type F</strain>
    </source>
</reference>
<gene>
    <name evidence="1" type="primary">tig</name>
    <name type="ordered locus">CLI_3371</name>
</gene>
<name>TIG_CLOBL</name>
<sequence>MNVKVENIEKNVVKLEITVDSEKFNEAVKKSFKKNAKRFNVPGFRKGKAPLNIIKKYYGEGVLFEDAINFCCEDTYPKAIEENNIKPVDYPQIDVVQIGEGKDFIYTAEVTTVPEVKLGEYKGVEVKKVSYEVEDEAVENELKSMQEKNARVSLKEEGEIEKGNIAIIDFKGYVDGKAFEGGEAKDYEIEIGSGTFIGDFEDQLVGLKKDESKEVNVSFPEEYGREDLNGKPATFEATIKDIKVKELPALDDEFAKEVSEFDTLEELKSDIKDRMKKELSEKAKAEYEEAVVEAVGANAEIEIPKVMIEKEIENMVRDLEMRLKYQGLDLKSYYEFTNSSEEKVKEYMRETAEKRVKTDLIMQEIAKVEDIKATEEELKEKAMEVAKQYGQKDVEKTAELIANAQKAYLEIDIVNGKVLDLLVENSKEIA</sequence>
<proteinExistence type="inferred from homology"/>
<organism>
    <name type="scientific">Clostridium botulinum (strain Langeland / NCTC 10281 / Type F)</name>
    <dbReference type="NCBI Taxonomy" id="441772"/>
    <lineage>
        <taxon>Bacteria</taxon>
        <taxon>Bacillati</taxon>
        <taxon>Bacillota</taxon>
        <taxon>Clostridia</taxon>
        <taxon>Eubacteriales</taxon>
        <taxon>Clostridiaceae</taxon>
        <taxon>Clostridium</taxon>
    </lineage>
</organism>